<evidence type="ECO:0000255" key="1">
    <source>
        <dbReference type="HAMAP-Rule" id="MF_01263"/>
    </source>
</evidence>
<dbReference type="EC" id="2.7.7.72" evidence="1"/>
<dbReference type="EMBL" id="AE009948">
    <property type="protein sequence ID" value="AAN00212.1"/>
    <property type="molecule type" value="Genomic_DNA"/>
</dbReference>
<dbReference type="RefSeq" id="NP_688339.1">
    <property type="nucleotide sequence ID" value="NC_004116.1"/>
</dbReference>
<dbReference type="RefSeq" id="WP_001238960.1">
    <property type="nucleotide sequence ID" value="NC_004116.1"/>
</dbReference>
<dbReference type="SMR" id="Q8DYY1"/>
<dbReference type="STRING" id="208435.SAG1341"/>
<dbReference type="KEGG" id="sag:SAG1341"/>
<dbReference type="PATRIC" id="fig|208435.3.peg.1349"/>
<dbReference type="HOGENOM" id="CLU_015961_3_0_9"/>
<dbReference type="OrthoDB" id="9805698at2"/>
<dbReference type="Proteomes" id="UP000000821">
    <property type="component" value="Chromosome"/>
</dbReference>
<dbReference type="GO" id="GO:0005524">
    <property type="term" value="F:ATP binding"/>
    <property type="evidence" value="ECO:0007669"/>
    <property type="project" value="UniProtKB-UniRule"/>
</dbReference>
<dbReference type="GO" id="GO:0004810">
    <property type="term" value="F:CCA tRNA nucleotidyltransferase activity"/>
    <property type="evidence" value="ECO:0007669"/>
    <property type="project" value="UniProtKB-UniRule"/>
</dbReference>
<dbReference type="GO" id="GO:0000287">
    <property type="term" value="F:magnesium ion binding"/>
    <property type="evidence" value="ECO:0007669"/>
    <property type="project" value="UniProtKB-UniRule"/>
</dbReference>
<dbReference type="GO" id="GO:0000049">
    <property type="term" value="F:tRNA binding"/>
    <property type="evidence" value="ECO:0007669"/>
    <property type="project" value="UniProtKB-UniRule"/>
</dbReference>
<dbReference type="GO" id="GO:0042245">
    <property type="term" value="P:RNA repair"/>
    <property type="evidence" value="ECO:0007669"/>
    <property type="project" value="UniProtKB-KW"/>
</dbReference>
<dbReference type="GO" id="GO:0001680">
    <property type="term" value="P:tRNA 3'-terminal CCA addition"/>
    <property type="evidence" value="ECO:0007669"/>
    <property type="project" value="UniProtKB-UniRule"/>
</dbReference>
<dbReference type="CDD" id="cd05398">
    <property type="entry name" value="NT_ClassII-CCAase"/>
    <property type="match status" value="1"/>
</dbReference>
<dbReference type="Gene3D" id="1.10.110.30">
    <property type="match status" value="1"/>
</dbReference>
<dbReference type="Gene3D" id="1.10.246.80">
    <property type="match status" value="1"/>
</dbReference>
<dbReference type="Gene3D" id="1.20.58.560">
    <property type="match status" value="1"/>
</dbReference>
<dbReference type="Gene3D" id="3.30.460.10">
    <property type="entry name" value="Beta Polymerase, domain 2"/>
    <property type="match status" value="1"/>
</dbReference>
<dbReference type="HAMAP" id="MF_01263">
    <property type="entry name" value="CCA_bact_type3"/>
    <property type="match status" value="1"/>
</dbReference>
<dbReference type="InterPro" id="IPR050264">
    <property type="entry name" value="Bact_CCA-adding_enz_type3_sf"/>
</dbReference>
<dbReference type="InterPro" id="IPR032810">
    <property type="entry name" value="CCA-adding_enz_C"/>
</dbReference>
<dbReference type="InterPro" id="IPR023068">
    <property type="entry name" value="CCA-adding_enz_firmicutes"/>
</dbReference>
<dbReference type="InterPro" id="IPR043519">
    <property type="entry name" value="NT_sf"/>
</dbReference>
<dbReference type="InterPro" id="IPR002646">
    <property type="entry name" value="PolA_pol_head_dom"/>
</dbReference>
<dbReference type="InterPro" id="IPR032828">
    <property type="entry name" value="PolyA_RNA-bd"/>
</dbReference>
<dbReference type="NCBIfam" id="NF009814">
    <property type="entry name" value="PRK13299.1"/>
    <property type="match status" value="1"/>
</dbReference>
<dbReference type="PANTHER" id="PTHR46173">
    <property type="entry name" value="CCA TRNA NUCLEOTIDYLTRANSFERASE 1, MITOCHONDRIAL"/>
    <property type="match status" value="1"/>
</dbReference>
<dbReference type="PANTHER" id="PTHR46173:SF1">
    <property type="entry name" value="CCA TRNA NUCLEOTIDYLTRANSFERASE 1, MITOCHONDRIAL"/>
    <property type="match status" value="1"/>
</dbReference>
<dbReference type="Pfam" id="PF01743">
    <property type="entry name" value="PolyA_pol"/>
    <property type="match status" value="1"/>
</dbReference>
<dbReference type="Pfam" id="PF12627">
    <property type="entry name" value="PolyA_pol_RNAbd"/>
    <property type="match status" value="1"/>
</dbReference>
<dbReference type="Pfam" id="PF13735">
    <property type="entry name" value="tRNA_NucTran2_2"/>
    <property type="match status" value="1"/>
</dbReference>
<dbReference type="SUPFAM" id="SSF81301">
    <property type="entry name" value="Nucleotidyltransferase"/>
    <property type="match status" value="1"/>
</dbReference>
<dbReference type="SUPFAM" id="SSF81891">
    <property type="entry name" value="Poly A polymerase C-terminal region-like"/>
    <property type="match status" value="1"/>
</dbReference>
<reference key="1">
    <citation type="journal article" date="2002" name="Proc. Natl. Acad. Sci. U.S.A.">
        <title>Complete genome sequence and comparative genomic analysis of an emerging human pathogen, serotype V Streptococcus agalactiae.</title>
        <authorList>
            <person name="Tettelin H."/>
            <person name="Masignani V."/>
            <person name="Cieslewicz M.J."/>
            <person name="Eisen J.A."/>
            <person name="Peterson S.N."/>
            <person name="Wessels M.R."/>
            <person name="Paulsen I.T."/>
            <person name="Nelson K.E."/>
            <person name="Margarit I."/>
            <person name="Read T.D."/>
            <person name="Madoff L.C."/>
            <person name="Wolf A.M."/>
            <person name="Beanan M.J."/>
            <person name="Brinkac L.M."/>
            <person name="Daugherty S.C."/>
            <person name="DeBoy R.T."/>
            <person name="Durkin A.S."/>
            <person name="Kolonay J.F."/>
            <person name="Madupu R."/>
            <person name="Lewis M.R."/>
            <person name="Radune D."/>
            <person name="Fedorova N.B."/>
            <person name="Scanlan D."/>
            <person name="Khouri H.M."/>
            <person name="Mulligan S."/>
            <person name="Carty H.A."/>
            <person name="Cline R.T."/>
            <person name="Van Aken S.E."/>
            <person name="Gill J."/>
            <person name="Scarselli M."/>
            <person name="Mora M."/>
            <person name="Iacobini E.T."/>
            <person name="Brettoni C."/>
            <person name="Galli G."/>
            <person name="Mariani M."/>
            <person name="Vegni F."/>
            <person name="Maione D."/>
            <person name="Rinaudo D."/>
            <person name="Rappuoli R."/>
            <person name="Telford J.L."/>
            <person name="Kasper D.L."/>
            <person name="Grandi G."/>
            <person name="Fraser C.M."/>
        </authorList>
    </citation>
    <scope>NUCLEOTIDE SEQUENCE [LARGE SCALE GENOMIC DNA]</scope>
    <source>
        <strain>ATCC BAA-611 / 2603 V/R</strain>
    </source>
</reference>
<comment type="function">
    <text evidence="1">Catalyzes the addition and repair of the essential 3'-terminal CCA sequence in tRNAs without using a nucleic acid template. Adds these three nucleotides in the order of C, C, and A to the tRNA nucleotide-73, using CTP and ATP as substrates and producing inorganic pyrophosphate. tRNA 3'-terminal CCA addition is required both for tRNA processing and repair. Also involved in tRNA surveillance by mediating tandem CCA addition to generate a CCACCA at the 3' terminus of unstable tRNAs. While stable tRNAs receive only 3'-terminal CCA, unstable tRNAs are marked with CCACCA and rapidly degraded.</text>
</comment>
<comment type="catalytic activity">
    <reaction evidence="1">
        <text>a tRNA precursor + 2 CTP + ATP = a tRNA with a 3' CCA end + 3 diphosphate</text>
        <dbReference type="Rhea" id="RHEA:14433"/>
        <dbReference type="Rhea" id="RHEA-COMP:10465"/>
        <dbReference type="Rhea" id="RHEA-COMP:10468"/>
        <dbReference type="ChEBI" id="CHEBI:30616"/>
        <dbReference type="ChEBI" id="CHEBI:33019"/>
        <dbReference type="ChEBI" id="CHEBI:37563"/>
        <dbReference type="ChEBI" id="CHEBI:74896"/>
        <dbReference type="ChEBI" id="CHEBI:83071"/>
        <dbReference type="EC" id="2.7.7.72"/>
    </reaction>
</comment>
<comment type="catalytic activity">
    <reaction evidence="1">
        <text>a tRNA with a 3' CCA end + 2 CTP + ATP = a tRNA with a 3' CCACCA end + 3 diphosphate</text>
        <dbReference type="Rhea" id="RHEA:76235"/>
        <dbReference type="Rhea" id="RHEA-COMP:10468"/>
        <dbReference type="Rhea" id="RHEA-COMP:18655"/>
        <dbReference type="ChEBI" id="CHEBI:30616"/>
        <dbReference type="ChEBI" id="CHEBI:33019"/>
        <dbReference type="ChEBI" id="CHEBI:37563"/>
        <dbReference type="ChEBI" id="CHEBI:83071"/>
        <dbReference type="ChEBI" id="CHEBI:195187"/>
    </reaction>
    <physiologicalReaction direction="left-to-right" evidence="1">
        <dbReference type="Rhea" id="RHEA:76236"/>
    </physiologicalReaction>
</comment>
<comment type="cofactor">
    <cofactor evidence="1">
        <name>Mg(2+)</name>
        <dbReference type="ChEBI" id="CHEBI:18420"/>
    </cofactor>
</comment>
<comment type="subunit">
    <text evidence="1">Homodimer.</text>
</comment>
<comment type="miscellaneous">
    <text evidence="1">A single active site specifically recognizes both ATP and CTP and is responsible for their addition.</text>
</comment>
<comment type="similarity">
    <text evidence="1">Belongs to the tRNA nucleotidyltransferase/poly(A) polymerase family. Bacterial CCA-adding enzyme type 3 subfamily.</text>
</comment>
<name>CCA_STRA5</name>
<sequence length="402" mass="46475">MRLNYLPSEFQKALPILKKIKKAGYEAYFVGGSVRDVLLDRPIHDVDIATSSYPEETKQIFKRTVDVGIEHGTVLVLEKGGEYEITTFRTEEVYVDYRRPSQVNFVRSLEEDLKRRDFTVNAFALNEDGEVIDLFHGLDDLDNHLLRAVGLASERFNEDALRIMRGLRFSASLNFDIETTTFEAMKKHASLLEKISVERSFIEFDKLLLAPYWRKGMLALIDSHAFNYLPCLKNRELQLSAFLSQLDKDFLFETSEQAWASLILSMEVEHTKTFLKKWKTSTHFQKDVEHIVDVYRIREQMGLTKEHLYRYGKTIIKQAEGIRKARGLMVDFEKIEQLDSELAIHDRHEIVVNGGTLIKKLGIKPGPQMGDIISQIELAIVLGQLINEEEAILHFVKQYLMD</sequence>
<protein>
    <recommendedName>
        <fullName evidence="1">CCA-adding enzyme</fullName>
        <ecNumber evidence="1">2.7.7.72</ecNumber>
    </recommendedName>
    <alternativeName>
        <fullName evidence="1">CCA tRNA nucleotidyltransferase</fullName>
    </alternativeName>
    <alternativeName>
        <fullName evidence="1">tRNA CCA-pyrophosphorylase</fullName>
    </alternativeName>
    <alternativeName>
        <fullName evidence="1">tRNA adenylyl-/cytidylyl- transferase</fullName>
    </alternativeName>
    <alternativeName>
        <fullName evidence="1">tRNA nucleotidyltransferase</fullName>
    </alternativeName>
    <alternativeName>
        <fullName evidence="1">tRNA-NT</fullName>
    </alternativeName>
</protein>
<proteinExistence type="inferred from homology"/>
<feature type="chain" id="PRO_0000139054" description="CCA-adding enzyme">
    <location>
        <begin position="1"/>
        <end position="402"/>
    </location>
</feature>
<feature type="binding site" evidence="1">
    <location>
        <position position="32"/>
    </location>
    <ligand>
        <name>ATP</name>
        <dbReference type="ChEBI" id="CHEBI:30616"/>
    </ligand>
</feature>
<feature type="binding site" evidence="1">
    <location>
        <position position="32"/>
    </location>
    <ligand>
        <name>CTP</name>
        <dbReference type="ChEBI" id="CHEBI:37563"/>
    </ligand>
</feature>
<feature type="binding site" evidence="1">
    <location>
        <position position="35"/>
    </location>
    <ligand>
        <name>ATP</name>
        <dbReference type="ChEBI" id="CHEBI:30616"/>
    </ligand>
</feature>
<feature type="binding site" evidence="1">
    <location>
        <position position="35"/>
    </location>
    <ligand>
        <name>CTP</name>
        <dbReference type="ChEBI" id="CHEBI:37563"/>
    </ligand>
</feature>
<feature type="binding site" evidence="1">
    <location>
        <position position="45"/>
    </location>
    <ligand>
        <name>Mg(2+)</name>
        <dbReference type="ChEBI" id="CHEBI:18420"/>
    </ligand>
</feature>
<feature type="binding site" evidence="1">
    <location>
        <position position="47"/>
    </location>
    <ligand>
        <name>Mg(2+)</name>
        <dbReference type="ChEBI" id="CHEBI:18420"/>
    </ligand>
</feature>
<feature type="binding site" evidence="1">
    <location>
        <position position="116"/>
    </location>
    <ligand>
        <name>ATP</name>
        <dbReference type="ChEBI" id="CHEBI:30616"/>
    </ligand>
</feature>
<feature type="binding site" evidence="1">
    <location>
        <position position="116"/>
    </location>
    <ligand>
        <name>CTP</name>
        <dbReference type="ChEBI" id="CHEBI:37563"/>
    </ligand>
</feature>
<feature type="binding site" evidence="1">
    <location>
        <position position="159"/>
    </location>
    <ligand>
        <name>ATP</name>
        <dbReference type="ChEBI" id="CHEBI:30616"/>
    </ligand>
</feature>
<feature type="binding site" evidence="1">
    <location>
        <position position="159"/>
    </location>
    <ligand>
        <name>CTP</name>
        <dbReference type="ChEBI" id="CHEBI:37563"/>
    </ligand>
</feature>
<feature type="binding site" evidence="1">
    <location>
        <position position="162"/>
    </location>
    <ligand>
        <name>ATP</name>
        <dbReference type="ChEBI" id="CHEBI:30616"/>
    </ligand>
</feature>
<feature type="binding site" evidence="1">
    <location>
        <position position="162"/>
    </location>
    <ligand>
        <name>CTP</name>
        <dbReference type="ChEBI" id="CHEBI:37563"/>
    </ligand>
</feature>
<feature type="binding site" evidence="1">
    <location>
        <position position="165"/>
    </location>
    <ligand>
        <name>ATP</name>
        <dbReference type="ChEBI" id="CHEBI:30616"/>
    </ligand>
</feature>
<feature type="binding site" evidence="1">
    <location>
        <position position="165"/>
    </location>
    <ligand>
        <name>CTP</name>
        <dbReference type="ChEBI" id="CHEBI:37563"/>
    </ligand>
</feature>
<feature type="binding site" evidence="1">
    <location>
        <position position="168"/>
    </location>
    <ligand>
        <name>ATP</name>
        <dbReference type="ChEBI" id="CHEBI:30616"/>
    </ligand>
</feature>
<feature type="binding site" evidence="1">
    <location>
        <position position="168"/>
    </location>
    <ligand>
        <name>CTP</name>
        <dbReference type="ChEBI" id="CHEBI:37563"/>
    </ligand>
</feature>
<gene>
    <name evidence="1" type="primary">cca</name>
    <name type="ordered locus">SAG1341</name>
</gene>
<organism>
    <name type="scientific">Streptococcus agalactiae serotype V (strain ATCC BAA-611 / 2603 V/R)</name>
    <dbReference type="NCBI Taxonomy" id="208435"/>
    <lineage>
        <taxon>Bacteria</taxon>
        <taxon>Bacillati</taxon>
        <taxon>Bacillota</taxon>
        <taxon>Bacilli</taxon>
        <taxon>Lactobacillales</taxon>
        <taxon>Streptococcaceae</taxon>
        <taxon>Streptococcus</taxon>
    </lineage>
</organism>
<accession>Q8DYY1</accession>
<keyword id="KW-0067">ATP-binding</keyword>
<keyword id="KW-0460">Magnesium</keyword>
<keyword id="KW-0479">Metal-binding</keyword>
<keyword id="KW-0547">Nucleotide-binding</keyword>
<keyword id="KW-0548">Nucleotidyltransferase</keyword>
<keyword id="KW-1185">Reference proteome</keyword>
<keyword id="KW-0692">RNA repair</keyword>
<keyword id="KW-0694">RNA-binding</keyword>
<keyword id="KW-0808">Transferase</keyword>
<keyword id="KW-0819">tRNA processing</keyword>